<accession>Q1LTF3</accession>
<name>RUVB_BAUCH</name>
<protein>
    <recommendedName>
        <fullName evidence="1">Holliday junction branch migration complex subunit RuvB</fullName>
        <ecNumber evidence="1">3.6.4.-</ecNumber>
    </recommendedName>
</protein>
<organism>
    <name type="scientific">Baumannia cicadellinicola subsp. Homalodisca coagulata</name>
    <dbReference type="NCBI Taxonomy" id="374463"/>
    <lineage>
        <taxon>Bacteria</taxon>
        <taxon>Pseudomonadati</taxon>
        <taxon>Pseudomonadota</taxon>
        <taxon>Gammaproteobacteria</taxon>
        <taxon>Candidatus Palibaumannia</taxon>
    </lineage>
</organism>
<proteinExistence type="inferred from homology"/>
<reference key="1">
    <citation type="journal article" date="2006" name="PLoS Biol.">
        <title>Metabolic complementarity and genomics of the dual bacterial symbiosis of sharpshooters.</title>
        <authorList>
            <person name="Wu D."/>
            <person name="Daugherty S.C."/>
            <person name="Van Aken S.E."/>
            <person name="Pai G.H."/>
            <person name="Watkins K.L."/>
            <person name="Khouri H."/>
            <person name="Tallon L.J."/>
            <person name="Zaborsky J.M."/>
            <person name="Dunbar H.E."/>
            <person name="Tran P.L."/>
            <person name="Moran N.A."/>
            <person name="Eisen J.A."/>
        </authorList>
    </citation>
    <scope>NUCLEOTIDE SEQUENCE [LARGE SCALE GENOMIC DNA]</scope>
</reference>
<feature type="chain" id="PRO_1000001366" description="Holliday junction branch migration complex subunit RuvB">
    <location>
        <begin position="1"/>
        <end position="335"/>
    </location>
</feature>
<feature type="region of interest" description="Large ATPase domain (RuvB-L)" evidence="1">
    <location>
        <begin position="4"/>
        <end position="183"/>
    </location>
</feature>
<feature type="region of interest" description="Small ATPAse domain (RuvB-S)" evidence="1">
    <location>
        <begin position="184"/>
        <end position="254"/>
    </location>
</feature>
<feature type="region of interest" description="Head domain (RuvB-H)" evidence="1">
    <location>
        <begin position="257"/>
        <end position="335"/>
    </location>
</feature>
<feature type="binding site" evidence="1">
    <location>
        <position position="23"/>
    </location>
    <ligand>
        <name>ATP</name>
        <dbReference type="ChEBI" id="CHEBI:30616"/>
    </ligand>
</feature>
<feature type="binding site" evidence="1">
    <location>
        <position position="64"/>
    </location>
    <ligand>
        <name>ATP</name>
        <dbReference type="ChEBI" id="CHEBI:30616"/>
    </ligand>
</feature>
<feature type="binding site" evidence="1">
    <location>
        <position position="67"/>
    </location>
    <ligand>
        <name>ATP</name>
        <dbReference type="ChEBI" id="CHEBI:30616"/>
    </ligand>
</feature>
<feature type="binding site" evidence="1">
    <location>
        <position position="68"/>
    </location>
    <ligand>
        <name>ATP</name>
        <dbReference type="ChEBI" id="CHEBI:30616"/>
    </ligand>
</feature>
<feature type="binding site" evidence="1">
    <location>
        <position position="68"/>
    </location>
    <ligand>
        <name>Mg(2+)</name>
        <dbReference type="ChEBI" id="CHEBI:18420"/>
    </ligand>
</feature>
<feature type="binding site" evidence="1">
    <location>
        <position position="69"/>
    </location>
    <ligand>
        <name>ATP</name>
        <dbReference type="ChEBI" id="CHEBI:30616"/>
    </ligand>
</feature>
<feature type="binding site" evidence="1">
    <location>
        <begin position="130"/>
        <end position="132"/>
    </location>
    <ligand>
        <name>ATP</name>
        <dbReference type="ChEBI" id="CHEBI:30616"/>
    </ligand>
</feature>
<feature type="binding site" evidence="1">
    <location>
        <position position="173"/>
    </location>
    <ligand>
        <name>ATP</name>
        <dbReference type="ChEBI" id="CHEBI:30616"/>
    </ligand>
</feature>
<feature type="binding site" evidence="1">
    <location>
        <position position="183"/>
    </location>
    <ligand>
        <name>ATP</name>
        <dbReference type="ChEBI" id="CHEBI:30616"/>
    </ligand>
</feature>
<feature type="binding site" evidence="1">
    <location>
        <position position="220"/>
    </location>
    <ligand>
        <name>ATP</name>
        <dbReference type="ChEBI" id="CHEBI:30616"/>
    </ligand>
</feature>
<feature type="binding site" evidence="1">
    <location>
        <position position="293"/>
    </location>
    <ligand>
        <name>DNA</name>
        <dbReference type="ChEBI" id="CHEBI:16991"/>
    </ligand>
</feature>
<feature type="binding site" evidence="1">
    <location>
        <position position="312"/>
    </location>
    <ligand>
        <name>DNA</name>
        <dbReference type="ChEBI" id="CHEBI:16991"/>
    </ligand>
</feature>
<feature type="binding site" evidence="1">
    <location>
        <position position="317"/>
    </location>
    <ligand>
        <name>DNA</name>
        <dbReference type="ChEBI" id="CHEBI:16991"/>
    </ligand>
</feature>
<evidence type="ECO:0000255" key="1">
    <source>
        <dbReference type="HAMAP-Rule" id="MF_00016"/>
    </source>
</evidence>
<comment type="function">
    <text evidence="1">The RuvA-RuvB-RuvC complex processes Holliday junction (HJ) DNA during genetic recombination and DNA repair, while the RuvA-RuvB complex plays an important role in the rescue of blocked DNA replication forks via replication fork reversal (RFR). RuvA specifically binds to HJ cruciform DNA, conferring on it an open structure. The RuvB hexamer acts as an ATP-dependent pump, pulling dsDNA into and through the RuvAB complex. RuvB forms 2 homohexamers on either side of HJ DNA bound by 1 or 2 RuvA tetramers; 4 subunits per hexamer contact DNA at a time. Coordinated motions by a converter formed by DNA-disengaged RuvB subunits stimulates ATP hydrolysis and nucleotide exchange. Immobilization of the converter enables RuvB to convert the ATP-contained energy into a lever motion, pulling 2 nucleotides of DNA out of the RuvA tetramer per ATP hydrolyzed, thus driving DNA branch migration. The RuvB motors rotate together with the DNA substrate, which together with the progressing nucleotide cycle form the mechanistic basis for DNA recombination by continuous HJ branch migration. Branch migration allows RuvC to scan DNA until it finds its consensus sequence, where it cleaves and resolves cruciform DNA.</text>
</comment>
<comment type="catalytic activity">
    <reaction evidence="1">
        <text>ATP + H2O = ADP + phosphate + H(+)</text>
        <dbReference type="Rhea" id="RHEA:13065"/>
        <dbReference type="ChEBI" id="CHEBI:15377"/>
        <dbReference type="ChEBI" id="CHEBI:15378"/>
        <dbReference type="ChEBI" id="CHEBI:30616"/>
        <dbReference type="ChEBI" id="CHEBI:43474"/>
        <dbReference type="ChEBI" id="CHEBI:456216"/>
    </reaction>
</comment>
<comment type="subunit">
    <text evidence="1">Homohexamer. Forms an RuvA(8)-RuvB(12)-Holliday junction (HJ) complex. HJ DNA is sandwiched between 2 RuvA tetramers; dsDNA enters through RuvA and exits via RuvB. An RuvB hexamer assembles on each DNA strand where it exits the tetramer. Each RuvB hexamer is contacted by two RuvA subunits (via domain III) on 2 adjacent RuvB subunits; this complex drives branch migration. In the full resolvosome a probable DNA-RuvA(4)-RuvB(12)-RuvC(2) complex forms which resolves the HJ.</text>
</comment>
<comment type="subcellular location">
    <subcellularLocation>
        <location evidence="1">Cytoplasm</location>
    </subcellularLocation>
</comment>
<comment type="domain">
    <text evidence="1">Has 3 domains, the large (RuvB-L) and small ATPase (RuvB-S) domains and the C-terminal head (RuvB-H) domain. The head domain binds DNA, while the ATPase domains jointly bind ATP, ADP or are empty depending on the state of the subunit in the translocation cycle. During a single DNA translocation step the structure of each domain remains the same, but their relative positions change.</text>
</comment>
<comment type="similarity">
    <text evidence="1">Belongs to the RuvB family.</text>
</comment>
<dbReference type="EC" id="3.6.4.-" evidence="1"/>
<dbReference type="EMBL" id="CP000238">
    <property type="protein sequence ID" value="ABF13874.1"/>
    <property type="molecule type" value="Genomic_DNA"/>
</dbReference>
<dbReference type="RefSeq" id="WP_011520494.1">
    <property type="nucleotide sequence ID" value="NC_007984.1"/>
</dbReference>
<dbReference type="SMR" id="Q1LTF3"/>
<dbReference type="STRING" id="374463.BCI_0312"/>
<dbReference type="KEGG" id="bci:BCI_0312"/>
<dbReference type="HOGENOM" id="CLU_055599_1_0_6"/>
<dbReference type="OrthoDB" id="9804478at2"/>
<dbReference type="Proteomes" id="UP000002427">
    <property type="component" value="Chromosome"/>
</dbReference>
<dbReference type="GO" id="GO:0005737">
    <property type="term" value="C:cytoplasm"/>
    <property type="evidence" value="ECO:0007669"/>
    <property type="project" value="UniProtKB-SubCell"/>
</dbReference>
<dbReference type="GO" id="GO:0048476">
    <property type="term" value="C:Holliday junction resolvase complex"/>
    <property type="evidence" value="ECO:0007669"/>
    <property type="project" value="UniProtKB-UniRule"/>
</dbReference>
<dbReference type="GO" id="GO:0005524">
    <property type="term" value="F:ATP binding"/>
    <property type="evidence" value="ECO:0007669"/>
    <property type="project" value="UniProtKB-UniRule"/>
</dbReference>
<dbReference type="GO" id="GO:0016887">
    <property type="term" value="F:ATP hydrolysis activity"/>
    <property type="evidence" value="ECO:0007669"/>
    <property type="project" value="InterPro"/>
</dbReference>
<dbReference type="GO" id="GO:0000400">
    <property type="term" value="F:four-way junction DNA binding"/>
    <property type="evidence" value="ECO:0007669"/>
    <property type="project" value="UniProtKB-UniRule"/>
</dbReference>
<dbReference type="GO" id="GO:0009378">
    <property type="term" value="F:four-way junction helicase activity"/>
    <property type="evidence" value="ECO:0007669"/>
    <property type="project" value="InterPro"/>
</dbReference>
<dbReference type="GO" id="GO:0006310">
    <property type="term" value="P:DNA recombination"/>
    <property type="evidence" value="ECO:0007669"/>
    <property type="project" value="UniProtKB-UniRule"/>
</dbReference>
<dbReference type="GO" id="GO:0006281">
    <property type="term" value="P:DNA repair"/>
    <property type="evidence" value="ECO:0007669"/>
    <property type="project" value="UniProtKB-UniRule"/>
</dbReference>
<dbReference type="CDD" id="cd00009">
    <property type="entry name" value="AAA"/>
    <property type="match status" value="1"/>
</dbReference>
<dbReference type="FunFam" id="1.10.10.10:FF:000086">
    <property type="entry name" value="Holliday junction ATP-dependent DNA helicase RuvB"/>
    <property type="match status" value="1"/>
</dbReference>
<dbReference type="FunFam" id="3.40.50.300:FF:000073">
    <property type="entry name" value="Holliday junction ATP-dependent DNA helicase RuvB"/>
    <property type="match status" value="1"/>
</dbReference>
<dbReference type="Gene3D" id="1.10.8.60">
    <property type="match status" value="1"/>
</dbReference>
<dbReference type="Gene3D" id="3.40.50.300">
    <property type="entry name" value="P-loop containing nucleotide triphosphate hydrolases"/>
    <property type="match status" value="1"/>
</dbReference>
<dbReference type="Gene3D" id="1.10.10.10">
    <property type="entry name" value="Winged helix-like DNA-binding domain superfamily/Winged helix DNA-binding domain"/>
    <property type="match status" value="1"/>
</dbReference>
<dbReference type="HAMAP" id="MF_00016">
    <property type="entry name" value="DNA_HJ_migration_RuvB"/>
    <property type="match status" value="1"/>
</dbReference>
<dbReference type="InterPro" id="IPR003593">
    <property type="entry name" value="AAA+_ATPase"/>
</dbReference>
<dbReference type="InterPro" id="IPR041445">
    <property type="entry name" value="AAA_lid_4"/>
</dbReference>
<dbReference type="InterPro" id="IPR004605">
    <property type="entry name" value="DNA_helicase_Holl-junc_RuvB"/>
</dbReference>
<dbReference type="InterPro" id="IPR027417">
    <property type="entry name" value="P-loop_NTPase"/>
</dbReference>
<dbReference type="InterPro" id="IPR008824">
    <property type="entry name" value="RuvB-like_N"/>
</dbReference>
<dbReference type="InterPro" id="IPR008823">
    <property type="entry name" value="RuvB_C"/>
</dbReference>
<dbReference type="InterPro" id="IPR036388">
    <property type="entry name" value="WH-like_DNA-bd_sf"/>
</dbReference>
<dbReference type="InterPro" id="IPR036390">
    <property type="entry name" value="WH_DNA-bd_sf"/>
</dbReference>
<dbReference type="NCBIfam" id="NF000868">
    <property type="entry name" value="PRK00080.1"/>
    <property type="match status" value="1"/>
</dbReference>
<dbReference type="NCBIfam" id="TIGR00635">
    <property type="entry name" value="ruvB"/>
    <property type="match status" value="1"/>
</dbReference>
<dbReference type="PANTHER" id="PTHR42848">
    <property type="match status" value="1"/>
</dbReference>
<dbReference type="PANTHER" id="PTHR42848:SF1">
    <property type="entry name" value="HOLLIDAY JUNCTION BRANCH MIGRATION COMPLEX SUBUNIT RUVB"/>
    <property type="match status" value="1"/>
</dbReference>
<dbReference type="Pfam" id="PF17864">
    <property type="entry name" value="AAA_lid_4"/>
    <property type="match status" value="1"/>
</dbReference>
<dbReference type="Pfam" id="PF05491">
    <property type="entry name" value="RuvB_C"/>
    <property type="match status" value="1"/>
</dbReference>
<dbReference type="Pfam" id="PF05496">
    <property type="entry name" value="RuvB_N"/>
    <property type="match status" value="1"/>
</dbReference>
<dbReference type="SMART" id="SM00382">
    <property type="entry name" value="AAA"/>
    <property type="match status" value="1"/>
</dbReference>
<dbReference type="SUPFAM" id="SSF52540">
    <property type="entry name" value="P-loop containing nucleoside triphosphate hydrolases"/>
    <property type="match status" value="1"/>
</dbReference>
<dbReference type="SUPFAM" id="SSF46785">
    <property type="entry name" value="Winged helix' DNA-binding domain"/>
    <property type="match status" value="1"/>
</dbReference>
<gene>
    <name evidence="1" type="primary">ruvB</name>
    <name type="ordered locus">BCI_0312</name>
</gene>
<sequence>MIEADNLNVTSIITDYNPIVDYRPKKLVDYIGQTNVREQMKIFIQAAKMRGDALDHVLLFGPPGLGKTTLANIIANEMEGSLRSTSGPVLEKAGDLAAILTNLEPHDVLFIDEIHRLSPVIEEILYPAMEDYKLDIIIGEGPAARSIKIQIPPFTLVGATTRIGSITSPLRDRFGIVQRLEFYPTKDLQNIISRSAANLSLSITDGGLSEIAKRARGTPRIALRLLRRVRDFAEVRAAGKITNNVAMNALNMLNVDTAGFNFMDRQLLLVIINKFLGGPVGLDNLAAAIGEERETIEDVLEPFLIQQGFLQRTPRGRIATAEAYRHFSLKQSRDI</sequence>
<keyword id="KW-0067">ATP-binding</keyword>
<keyword id="KW-0963">Cytoplasm</keyword>
<keyword id="KW-0227">DNA damage</keyword>
<keyword id="KW-0233">DNA recombination</keyword>
<keyword id="KW-0234">DNA repair</keyword>
<keyword id="KW-0238">DNA-binding</keyword>
<keyword id="KW-0378">Hydrolase</keyword>
<keyword id="KW-0547">Nucleotide-binding</keyword>
<keyword id="KW-1185">Reference proteome</keyword>